<reference key="1">
    <citation type="journal article" date="2014" name="Nat. Commun.">
        <title>Genomic adaptations of the halophilic Dead Sea filamentous fungus Eurotium rubrum.</title>
        <authorList>
            <person name="Kis-Papo T."/>
            <person name="Weig A.R."/>
            <person name="Riley R."/>
            <person name="Persoh D."/>
            <person name="Salamov A."/>
            <person name="Sun H."/>
            <person name="Lipzen A."/>
            <person name="Wasser S.P."/>
            <person name="Rambold G."/>
            <person name="Grigoriev I.V."/>
            <person name="Nevo E."/>
        </authorList>
    </citation>
    <scope>NUCLEOTIDE SEQUENCE [LARGE SCALE GENOMIC DNA]</scope>
    <source>
        <strain>CBS 135680</strain>
    </source>
</reference>
<reference key="2">
    <citation type="journal article" date="2020" name="Org. Lett.">
        <title>Biosynthesis of the prenylated salicylaldehyde flavoglaucin requires temporary reduction to salicyl alcohol for decoration before reoxidation to the final product.</title>
        <authorList>
            <person name="Nies J."/>
            <person name="Ran H."/>
            <person name="Wohlgemuth V."/>
            <person name="Yin W.B."/>
            <person name="Li S.M."/>
        </authorList>
    </citation>
    <scope>FUNCTION</scope>
    <scope>DISRUPTION PHENOTYPE</scope>
    <scope>PATHWAY</scope>
</reference>
<feature type="chain" id="PRO_0000456592" description="Short-chain dehydrogenase fogD">
    <location>
        <begin position="1"/>
        <end position="286"/>
    </location>
</feature>
<feature type="active site" description="Proton acceptor" evidence="3">
    <location>
        <position position="147"/>
    </location>
</feature>
<feature type="active site" description="Lowers pKa of active site Tyr" evidence="2">
    <location>
        <position position="151"/>
    </location>
</feature>
<feature type="binding site" evidence="1">
    <location>
        <position position="8"/>
    </location>
    <ligand>
        <name>NADP(+)</name>
        <dbReference type="ChEBI" id="CHEBI:58349"/>
    </ligand>
</feature>
<feature type="binding site" evidence="1">
    <location>
        <position position="34"/>
    </location>
    <ligand>
        <name>NADP(+)</name>
        <dbReference type="ChEBI" id="CHEBI:58349"/>
    </ligand>
</feature>
<feature type="binding site" evidence="1">
    <location>
        <position position="55"/>
    </location>
    <ligand>
        <name>NADP(+)</name>
        <dbReference type="ChEBI" id="CHEBI:58349"/>
    </ligand>
</feature>
<feature type="binding site" evidence="2">
    <location>
        <position position="147"/>
    </location>
    <ligand>
        <name>NADP(+)</name>
        <dbReference type="ChEBI" id="CHEBI:58349"/>
    </ligand>
</feature>
<feature type="binding site" evidence="2">
    <location>
        <position position="151"/>
    </location>
    <ligand>
        <name>NADP(+)</name>
        <dbReference type="ChEBI" id="CHEBI:58349"/>
    </ligand>
</feature>
<feature type="binding site" evidence="2">
    <location>
        <position position="180"/>
    </location>
    <ligand>
        <name>NADP(+)</name>
        <dbReference type="ChEBI" id="CHEBI:58349"/>
    </ligand>
</feature>
<feature type="binding site" evidence="1">
    <location>
        <position position="182"/>
    </location>
    <ligand>
        <name>NADP(+)</name>
        <dbReference type="ChEBI" id="CHEBI:58349"/>
    </ligand>
</feature>
<protein>
    <recommendedName>
        <fullName evidence="5">Short-chain dehydrogenase fogD</fullName>
        <ecNumber evidence="7">1.1.1.-</ecNumber>
    </recommendedName>
    <alternativeName>
        <fullName evidence="5">Flavoglaucin biosynthesis cluster protein D</fullName>
    </alternativeName>
</protein>
<organism>
    <name type="scientific">Aspergillus ruber (strain CBS 135680)</name>
    <dbReference type="NCBI Taxonomy" id="1388766"/>
    <lineage>
        <taxon>Eukaryota</taxon>
        <taxon>Fungi</taxon>
        <taxon>Dikarya</taxon>
        <taxon>Ascomycota</taxon>
        <taxon>Pezizomycotina</taxon>
        <taxon>Eurotiomycetes</taxon>
        <taxon>Eurotiomycetidae</taxon>
        <taxon>Eurotiales</taxon>
        <taxon>Aspergillaceae</taxon>
        <taxon>Aspergillus</taxon>
        <taxon>Aspergillus subgen. Aspergillus</taxon>
    </lineage>
</organism>
<evidence type="ECO:0000250" key="1">
    <source>
        <dbReference type="UniProtKB" id="L0E2Z4"/>
    </source>
</evidence>
<evidence type="ECO:0000250" key="2">
    <source>
        <dbReference type="UniProtKB" id="O93868"/>
    </source>
</evidence>
<evidence type="ECO:0000255" key="3">
    <source>
        <dbReference type="PROSITE-ProRule" id="PRU10001"/>
    </source>
</evidence>
<evidence type="ECO:0000269" key="4">
    <source>
    </source>
</evidence>
<evidence type="ECO:0000303" key="5">
    <source>
    </source>
</evidence>
<evidence type="ECO:0000305" key="6"/>
<evidence type="ECO:0000305" key="7">
    <source>
    </source>
</evidence>
<gene>
    <name evidence="5" type="primary">fogD</name>
    <name type="ORF">EURHEDRAFT_455854</name>
</gene>
<proteinExistence type="inferred from homology"/>
<name>FOGD_ASPRC</name>
<comment type="function">
    <text evidence="4">Short-chain dehydrogenase; part of the gene cluster that mediates the biosynthesis of flavoglaucin and congeners (including aspergin, dihydroauroglaucin and auroglaucin), prenylated salicylaldehyde derivatives carrying a saturated or an unsaturated C-7 side chain (PubMed:32134669). The PKS fogA releases the carboxylic acid (8E,10E,12E)-3,5,7-trihydroxytetradeca-8,10,12-trienoic acid as its product, as well as derivatives with one and two double bonds (PubMed:32134669). FogA is indeed able to reduce the initial triketide, thus being at least partially responsible for the differently saturated heptyl side chains of flavoglaucin congeners (PubMed:32134669). The oxidoreductases fogB, fogC and fogD modify the nascent polyketide in fogA-bound form and, together, fogA, fogB, fogC and fogD are necessary for the formation of the aromatic core and the cyclized PKS products are released as salicyl alcohols (PubMed:32134669). In particular, fogB is responsible for oxidation of a hydroxyl group or reduction of remaining double bond(s) at the C-7 residue whereas fogD is probably involved in the reductive release of the modified PKS products (PubMed:32134669). The cytochrome P450 monooxygenase fogE is then responsible for the hydroxylation at C-3 of the benzene ring (PubMed:32134669). The fogE products are substrates of the prenyltransferase fogH and the prenylated benzyl alcohols are subsequently oxidized by the fogF to produce the final aryl aldehydes flavoglaucin and congeners (PubMed:32134669). The short-chain dehydrogenase fogG does not seem to be involved in the biosynthesis of the prenylated salicylaldehyde derivatives (PubMed:32134669).</text>
</comment>
<comment type="pathway">
    <text evidence="4">Secondary metabolite biosynthesis.</text>
</comment>
<comment type="disruption phenotype">
    <text evidence="4">Impairs the production of flavoglaucin and congeners, and leads to very low accumulation of the carboxylic acid (8E,10E,12E)-3,5,7-trihydroxytetradeca-8,10,12-trienoic acid.</text>
</comment>
<comment type="similarity">
    <text evidence="6">Belongs to the short-chain dehydrogenases/reductases (SDR) family.</text>
</comment>
<keyword id="KW-0521">NADP</keyword>
<keyword id="KW-0560">Oxidoreductase</keyword>
<keyword id="KW-1185">Reference proteome</keyword>
<accession>A0A017SE81</accession>
<sequence length="286" mass="31804">MSTKFALVTGCGQGGIGEALITEYARRGIHAIATVLPAEPSDHLARAGITFFPLDVTNEESVLELKARVQKLTGGRLDVLVNCAGIAYTMTAIDTDVAAVQRMFNVNVFGPMRMVHHFHDMIIKATGAIVNIGSIGGVVPYLYGSSYNATKAALQHWSNTLRVEMAPFDVRVITVISGEVATNILKNDAHRRLPEGSYYSPLAENFRQHVTRTPPRTTDRFQYAANVVAESLRSSPSAWFWYGSQSTLIRFLDMFCWRTVWDSLFWRMFDLGKLKEAHSSKAKKQV</sequence>
<dbReference type="EC" id="1.1.1.-" evidence="7"/>
<dbReference type="EMBL" id="KK088422">
    <property type="protein sequence ID" value="EYE95338.1"/>
    <property type="molecule type" value="Genomic_DNA"/>
</dbReference>
<dbReference type="SMR" id="A0A017SE81"/>
<dbReference type="STRING" id="1388766.A0A017SE81"/>
<dbReference type="HOGENOM" id="CLU_010194_2_9_1"/>
<dbReference type="OrthoDB" id="2102561at2759"/>
<dbReference type="Proteomes" id="UP000019804">
    <property type="component" value="Unassembled WGS sequence"/>
</dbReference>
<dbReference type="GO" id="GO:0005783">
    <property type="term" value="C:endoplasmic reticulum"/>
    <property type="evidence" value="ECO:0007669"/>
    <property type="project" value="TreeGrafter"/>
</dbReference>
<dbReference type="GO" id="GO:0005811">
    <property type="term" value="C:lipid droplet"/>
    <property type="evidence" value="ECO:0007669"/>
    <property type="project" value="TreeGrafter"/>
</dbReference>
<dbReference type="GO" id="GO:0000140">
    <property type="term" value="F:acylglycerone-phosphate reductase (NADP+) activity"/>
    <property type="evidence" value="ECO:0007669"/>
    <property type="project" value="TreeGrafter"/>
</dbReference>
<dbReference type="GO" id="GO:0004806">
    <property type="term" value="F:triacylglycerol lipase activity"/>
    <property type="evidence" value="ECO:0007669"/>
    <property type="project" value="TreeGrafter"/>
</dbReference>
<dbReference type="GO" id="GO:0006654">
    <property type="term" value="P:phosphatidic acid biosynthetic process"/>
    <property type="evidence" value="ECO:0007669"/>
    <property type="project" value="TreeGrafter"/>
</dbReference>
<dbReference type="GO" id="GO:0044550">
    <property type="term" value="P:secondary metabolite biosynthetic process"/>
    <property type="evidence" value="ECO:0007669"/>
    <property type="project" value="UniProtKB-ARBA"/>
</dbReference>
<dbReference type="GO" id="GO:0019433">
    <property type="term" value="P:triglyceride catabolic process"/>
    <property type="evidence" value="ECO:0007669"/>
    <property type="project" value="TreeGrafter"/>
</dbReference>
<dbReference type="CDD" id="cd05374">
    <property type="entry name" value="17beta-HSD-like_SDR_c"/>
    <property type="match status" value="1"/>
</dbReference>
<dbReference type="Gene3D" id="3.40.50.720">
    <property type="entry name" value="NAD(P)-binding Rossmann-like Domain"/>
    <property type="match status" value="1"/>
</dbReference>
<dbReference type="InterPro" id="IPR036291">
    <property type="entry name" value="NAD(P)-bd_dom_sf"/>
</dbReference>
<dbReference type="InterPro" id="IPR020904">
    <property type="entry name" value="Sc_DH/Rdtase_CS"/>
</dbReference>
<dbReference type="InterPro" id="IPR002347">
    <property type="entry name" value="SDR_fam"/>
</dbReference>
<dbReference type="PANTHER" id="PTHR44169">
    <property type="entry name" value="NADPH-DEPENDENT 1-ACYLDIHYDROXYACETONE PHOSPHATE REDUCTASE"/>
    <property type="match status" value="1"/>
</dbReference>
<dbReference type="PANTHER" id="PTHR44169:SF3">
    <property type="entry name" value="SHORT-CHAIN DEHYDROGENASE SRDE"/>
    <property type="match status" value="1"/>
</dbReference>
<dbReference type="Pfam" id="PF00106">
    <property type="entry name" value="adh_short"/>
    <property type="match status" value="1"/>
</dbReference>
<dbReference type="PRINTS" id="PR00081">
    <property type="entry name" value="GDHRDH"/>
</dbReference>
<dbReference type="PRINTS" id="PR00080">
    <property type="entry name" value="SDRFAMILY"/>
</dbReference>
<dbReference type="SUPFAM" id="SSF51735">
    <property type="entry name" value="NAD(P)-binding Rossmann-fold domains"/>
    <property type="match status" value="1"/>
</dbReference>
<dbReference type="PROSITE" id="PS00061">
    <property type="entry name" value="ADH_SHORT"/>
    <property type="match status" value="1"/>
</dbReference>